<feature type="chain" id="PRO_0000293985" description="Uncharacterized membrane protein ycf78">
    <location>
        <begin position="1"/>
        <end position="2335"/>
    </location>
</feature>
<feature type="transmembrane region" description="Helical" evidence="1">
    <location>
        <begin position="114"/>
        <end position="134"/>
    </location>
</feature>
<feature type="transmembrane region" description="Helical" evidence="1">
    <location>
        <begin position="148"/>
        <end position="167"/>
    </location>
</feature>
<feature type="transmembrane region" description="Helical" evidence="1">
    <location>
        <begin position="172"/>
        <end position="194"/>
    </location>
</feature>
<feature type="transmembrane region" description="Helical" evidence="1">
    <location>
        <begin position="214"/>
        <end position="234"/>
    </location>
</feature>
<feature type="transmembrane region" description="Helical" evidence="1">
    <location>
        <begin position="255"/>
        <end position="275"/>
    </location>
</feature>
<feature type="transmembrane region" description="Helical" evidence="1">
    <location>
        <begin position="307"/>
        <end position="327"/>
    </location>
</feature>
<feature type="transmembrane region" description="Helical" evidence="1">
    <location>
        <begin position="2086"/>
        <end position="2106"/>
    </location>
</feature>
<feature type="region of interest" description="Disordered" evidence="2">
    <location>
        <begin position="1043"/>
        <end position="1064"/>
    </location>
</feature>
<feature type="region of interest" description="Disordered" evidence="2">
    <location>
        <begin position="1458"/>
        <end position="1479"/>
    </location>
</feature>
<feature type="region of interest" description="Disordered" evidence="2">
    <location>
        <begin position="2200"/>
        <end position="2222"/>
    </location>
</feature>
<feature type="coiled-coil region" evidence="1">
    <location>
        <begin position="1174"/>
        <end position="1202"/>
    </location>
</feature>
<feature type="coiled-coil region" evidence="1">
    <location>
        <begin position="1417"/>
        <end position="1447"/>
    </location>
</feature>
<feature type="compositionally biased region" description="Polar residues" evidence="2">
    <location>
        <begin position="1043"/>
        <end position="1052"/>
    </location>
</feature>
<feature type="compositionally biased region" description="Polar residues" evidence="2">
    <location>
        <begin position="1458"/>
        <end position="1471"/>
    </location>
</feature>
<name>YCF78_TETOB</name>
<organism>
    <name type="scientific">Tetradesmus obliquus</name>
    <name type="common">Green alga</name>
    <name type="synonym">Acutodesmus obliquus</name>
    <dbReference type="NCBI Taxonomy" id="3088"/>
    <lineage>
        <taxon>Eukaryota</taxon>
        <taxon>Viridiplantae</taxon>
        <taxon>Chlorophyta</taxon>
        <taxon>core chlorophytes</taxon>
        <taxon>Chlorophyceae</taxon>
        <taxon>CS clade</taxon>
        <taxon>Sphaeropleales</taxon>
        <taxon>Scenedesmaceae</taxon>
        <taxon>Tetradesmus</taxon>
    </lineage>
</organism>
<proteinExistence type="inferred from homology"/>
<sequence>MFTTMSLVTSIKDYVEVVHKLIETDPNFNITTYYDFGSILTFVILSGKDLIGKFLSFQWFQTIWSIPTLIPDIASAMISEISIFDGYFQNTQTLLESPISYGNNNFFIYCSEKFMIGLLNSVFLCLPTSIAHIITLRRFVMQGLEAGFISGLGTIAGNIVWIGSIVFGLRFVVIPWLSLDLFRAFLGFVLIVKYMWDSYTERRMVLEDLSKYKIFFLTFLLSFTEQTTIYPFLSNLSLGSDSTLLESFPTENFYEFGFVHLCYLLGILVGSLSLLQFTCWFWENPAFQIYMWFISSFKTTTSVYSKFVNLTFLYLTMICAISNIAYFGLDYTLTNPLGFVHEDRLLDQKALLETAFLNTKASDRNTRRNRGRHGRRERWKRRVRRYRTFDASLYDQGVYDLLTLEDLNYGFDRFWLRRKIRNHRVRFRFFPGPWMRSFKKQLSRPRLESFMGPRVEFFRILFEQAYHPEFHEFSTKKNVLKQNQTSTQSSSSNQFQIPFFGQQNNERSAKGEKMENIQSIYWNPIGNKKEKLLKEQSTLRKFVRKVNTRIQVAKIQSELKRPQNLELSLENSKNLTQPISSKAWNSFAVLETGDLNSTQFTLNKDGNQRKDLSVFKKSEENILFQRFYNKIFLEQNQKKNIFGVKTSESLSGKNFENNFQNTLSKKERFLERYKTFLRTPAAVSEQKQLKIQTKNSSEKSMLLPLTSETSSFNTFSQKPNSSSSILSQKNLETQSNLRNLQNESQYRSMTLLHPLKFYFQKEQAFQRKLNFYGVKLFRNFGVENNAPYYRVMMKRFFYHYKPTLRWERTLRVATMRRARRKSSRIPRKFNVSKSSQILATGSADFNTLEKENNLKKNQVFDQSVITKPTHFYSLVEKRASRYRYQIYKDVLQHWYYSPLNRFLLKVDVDSFIRRQPKSYFLTKNDEKFLHLKRQLLSEYYETLRWYTYMQHYSTMKNQIGGTKSLSSRAYNQQFVGTFKKIRHLFNITPTLNDTNVLKFDQPLYNEYKNSQNLSVFNESIVHEELLADDFFFLKNEKKEKNTATSESISFNQTKEKSNSTLGRLPDDLPNQSANILREYLATATPIRQEYIQNLLREKNYWELTKFLFRGQKIRGTNPITNETTFLNQEKTYLLDSKFKTPEFDTQKFKEEMWISLLKKCQNKLYDQEALKNYVTLKKEKYENKKQKHERYLKNRLERMKEAFILQNRGEQKQNGNFEFQNFSGYTSSIQKAMKESIIWEKNSLSSSSFQTIDKFFAKKNFLQKTNIRNNRPNIYLGLKENLNVSDLQENKNQQNFDSTQTNQVNPQKMQAFVFTTSLKNSFKQRAFEIIEAENLFKKNFSSSKFEKKSFLLNSKPMNAIQKFFSNTLRFKNFTSSNQVLQTPKPKFIQNIPILSKIVSIGKYGTRETSQKNLDFWKKRENALSKRRKIRKTLKRLRNQNTSTEKIVFENRDFGSQMQTSQLTKNSFNPSRQKTDKNLENSLDSVNSFFSKIERTNDFSEKEQGTRSESWKKYYSYKPNQNQSKNNEESLVSERETFMQKLVALPKNVFEKGQKSFFPKKFQRKRSRLRRYSSFKGRGPIKKRTLREKLKRQFKSLKKYGTTQENSTSQQIQLERENKKFELIQLITQRSSVLRGDQKFLKREQKQRRTRQMKHRAWKKKKQNFAQKRRKLRKRRRSTIAKIRVFNKKLQRILSKKEIQKWWWQTFFPTFQKETETTWQNQKNMQIRKELFELSEKEILERDQMTNAIEQNNEKTENAFQALQIGDKDYKPFAIPEALRIREKLIQKDILRFNGPKENSFIESSTNSFDNSKNLNASTSEEFKLQNSRNLSSQMSQTMVDSQSNFDFFEKVTGNISTNQANISNLSNSLQTQKFLVGTNPIPFYAGWDESLRKFVITNRLLSRKENFVFSTKAINTLFAAQQTNKNDSTLRQEFSKAPLQGMNAATTLYWQIPFTTYDPDQFFALGMDGFSPLGWRNFSFKHSKQTTKPILVKNFFSFQNNSKEFSKNLQFKFLQNTLKTKIFNPNTCNNVQNCLNLNEFEKTNTVGFSTTSQKKLFSKAEIDKNFEYRRILKKQKRIKKHPRPPVWFPSGSLSQQVLPVHYIYVFYKRSRLPRDRYIRRRLRSTFLKNKNSTETFANNPTITKITDFTLRKRTKPRRKYHRKRFLLDTNQFLLRRRKFRSFLDENETIRPSSKLFETSKQEKRILKSKQRRKITDSKQSTENLRLRQLRRRVQRQVFRPVSRYQPRAGGFVWPGDYLRLELVKAPQLNTTPLSSGGTQENIEVFQQENSSRKIRKKKRRTLQEWQIQPKKYLLEKHNIKVLKKRLKKSLQNTNF</sequence>
<accession>Q1KVQ9</accession>
<gene>
    <name type="primary">ycf78</name>
    <name type="synonym">ycf1</name>
</gene>
<dbReference type="EMBL" id="DQ396875">
    <property type="protein sequence ID" value="ABD48298.1"/>
    <property type="molecule type" value="Genomic_DNA"/>
</dbReference>
<dbReference type="RefSeq" id="YP_636015.1">
    <property type="nucleotide sequence ID" value="NC_008101.1"/>
</dbReference>
<dbReference type="SMR" id="Q1KVQ9"/>
<dbReference type="GeneID" id="4099849"/>
<dbReference type="GO" id="GO:0031969">
    <property type="term" value="C:chloroplast membrane"/>
    <property type="evidence" value="ECO:0007669"/>
    <property type="project" value="UniProtKB-SubCell"/>
</dbReference>
<evidence type="ECO:0000255" key="1"/>
<evidence type="ECO:0000256" key="2">
    <source>
        <dbReference type="SAM" id="MobiDB-lite"/>
    </source>
</evidence>
<evidence type="ECO:0000305" key="3"/>
<geneLocation type="chloroplast"/>
<comment type="subcellular location">
    <subcellularLocation>
        <location evidence="3">Plastid</location>
        <location evidence="3">Chloroplast membrane</location>
        <topology evidence="3">Multi-pass membrane protein</topology>
    </subcellularLocation>
</comment>
<comment type="similarity">
    <text evidence="3">Belongs to the ycf78 family.</text>
</comment>
<keyword id="KW-0150">Chloroplast</keyword>
<keyword id="KW-0175">Coiled coil</keyword>
<keyword id="KW-0472">Membrane</keyword>
<keyword id="KW-0934">Plastid</keyword>
<keyword id="KW-0812">Transmembrane</keyword>
<keyword id="KW-1133">Transmembrane helix</keyword>
<protein>
    <recommendedName>
        <fullName>Uncharacterized membrane protein ycf78</fullName>
    </recommendedName>
    <alternativeName>
        <fullName>RF1</fullName>
    </alternativeName>
    <alternativeName>
        <fullName>ycf1</fullName>
    </alternativeName>
</protein>
<reference key="1">
    <citation type="journal article" date="2006" name="BMC Evol. Biol.">
        <title>The complete chloroplast genome sequence of the chlorophycean green alga Scenedesmus obliquus reveals a compact gene organization and a biased distribution of genes on the two DNA strands.</title>
        <authorList>
            <person name="de Cambiaire J.-C."/>
            <person name="Otis C."/>
            <person name="Lemieux C."/>
            <person name="Turmel M."/>
        </authorList>
    </citation>
    <scope>NUCLEOTIDE SEQUENCE [LARGE SCALE GENOMIC DNA]</scope>
    <source>
        <strain>UTEX 393</strain>
    </source>
</reference>